<name>LEUD_MYCVP</name>
<organism>
    <name type="scientific">Mycolicibacterium vanbaalenii (strain DSM 7251 / JCM 13017 / BCRC 16820 / KCTC 9966 / NRRL B-24157 / PYR-1)</name>
    <name type="common">Mycobacterium vanbaalenii</name>
    <dbReference type="NCBI Taxonomy" id="350058"/>
    <lineage>
        <taxon>Bacteria</taxon>
        <taxon>Bacillati</taxon>
        <taxon>Actinomycetota</taxon>
        <taxon>Actinomycetes</taxon>
        <taxon>Mycobacteriales</taxon>
        <taxon>Mycobacteriaceae</taxon>
        <taxon>Mycolicibacterium</taxon>
    </lineage>
</organism>
<protein>
    <recommendedName>
        <fullName evidence="1">3-isopropylmalate dehydratase small subunit</fullName>
        <ecNumber evidence="1">4.2.1.33</ecNumber>
    </recommendedName>
    <alternativeName>
        <fullName evidence="1">Alpha-IPM isomerase</fullName>
        <shortName evidence="1">IPMI</shortName>
    </alternativeName>
    <alternativeName>
        <fullName evidence="1">Isopropylmalate isomerase</fullName>
    </alternativeName>
</protein>
<reference key="1">
    <citation type="submission" date="2006-12" db="EMBL/GenBank/DDBJ databases">
        <title>Complete sequence of Mycobacterium vanbaalenii PYR-1.</title>
        <authorList>
            <consortium name="US DOE Joint Genome Institute"/>
            <person name="Copeland A."/>
            <person name="Lucas S."/>
            <person name="Lapidus A."/>
            <person name="Barry K."/>
            <person name="Detter J.C."/>
            <person name="Glavina del Rio T."/>
            <person name="Hammon N."/>
            <person name="Israni S."/>
            <person name="Dalin E."/>
            <person name="Tice H."/>
            <person name="Pitluck S."/>
            <person name="Singan V."/>
            <person name="Schmutz J."/>
            <person name="Larimer F."/>
            <person name="Land M."/>
            <person name="Hauser L."/>
            <person name="Kyrpides N."/>
            <person name="Anderson I.J."/>
            <person name="Miller C."/>
            <person name="Richardson P."/>
        </authorList>
    </citation>
    <scope>NUCLEOTIDE SEQUENCE [LARGE SCALE GENOMIC DNA]</scope>
    <source>
        <strain>DSM 7251 / JCM 13017 / BCRC 16820 / KCTC 9966 / NRRL B-24157 / PYR-1</strain>
    </source>
</reference>
<accession>A1T701</accession>
<feature type="chain" id="PRO_1000063794" description="3-isopropylmalate dehydratase small subunit">
    <location>
        <begin position="1"/>
        <end position="197"/>
    </location>
</feature>
<gene>
    <name evidence="1" type="primary">leuD</name>
    <name type="ordered locus">Mvan_2136</name>
</gene>
<keyword id="KW-0028">Amino-acid biosynthesis</keyword>
<keyword id="KW-0100">Branched-chain amino acid biosynthesis</keyword>
<keyword id="KW-0432">Leucine biosynthesis</keyword>
<keyword id="KW-0456">Lyase</keyword>
<dbReference type="EC" id="4.2.1.33" evidence="1"/>
<dbReference type="EMBL" id="CP000511">
    <property type="protein sequence ID" value="ABM12951.1"/>
    <property type="molecule type" value="Genomic_DNA"/>
</dbReference>
<dbReference type="RefSeq" id="WP_011779365.1">
    <property type="nucleotide sequence ID" value="NC_008726.1"/>
</dbReference>
<dbReference type="SMR" id="A1T701"/>
<dbReference type="STRING" id="350058.Mvan_2136"/>
<dbReference type="KEGG" id="mva:Mvan_2136"/>
<dbReference type="eggNOG" id="COG0066">
    <property type="taxonomic scope" value="Bacteria"/>
</dbReference>
<dbReference type="HOGENOM" id="CLU_081378_0_1_11"/>
<dbReference type="UniPathway" id="UPA00048">
    <property type="reaction ID" value="UER00071"/>
</dbReference>
<dbReference type="Proteomes" id="UP000009159">
    <property type="component" value="Chromosome"/>
</dbReference>
<dbReference type="GO" id="GO:0009316">
    <property type="term" value="C:3-isopropylmalate dehydratase complex"/>
    <property type="evidence" value="ECO:0007669"/>
    <property type="project" value="InterPro"/>
</dbReference>
<dbReference type="GO" id="GO:0003861">
    <property type="term" value="F:3-isopropylmalate dehydratase activity"/>
    <property type="evidence" value="ECO:0007669"/>
    <property type="project" value="UniProtKB-UniRule"/>
</dbReference>
<dbReference type="GO" id="GO:0009098">
    <property type="term" value="P:L-leucine biosynthetic process"/>
    <property type="evidence" value="ECO:0007669"/>
    <property type="project" value="UniProtKB-UniRule"/>
</dbReference>
<dbReference type="CDD" id="cd01577">
    <property type="entry name" value="IPMI_Swivel"/>
    <property type="match status" value="1"/>
</dbReference>
<dbReference type="FunFam" id="3.20.19.10:FF:000003">
    <property type="entry name" value="3-isopropylmalate dehydratase small subunit"/>
    <property type="match status" value="1"/>
</dbReference>
<dbReference type="Gene3D" id="3.20.19.10">
    <property type="entry name" value="Aconitase, domain 4"/>
    <property type="match status" value="1"/>
</dbReference>
<dbReference type="HAMAP" id="MF_01031">
    <property type="entry name" value="LeuD_type1"/>
    <property type="match status" value="1"/>
</dbReference>
<dbReference type="InterPro" id="IPR004431">
    <property type="entry name" value="3-IsopropMal_deHydase_ssu"/>
</dbReference>
<dbReference type="InterPro" id="IPR015928">
    <property type="entry name" value="Aconitase/3IPM_dehydase_swvl"/>
</dbReference>
<dbReference type="InterPro" id="IPR000573">
    <property type="entry name" value="AconitaseA/IPMdHydase_ssu_swvl"/>
</dbReference>
<dbReference type="InterPro" id="IPR033940">
    <property type="entry name" value="IPMI_Swivel"/>
</dbReference>
<dbReference type="InterPro" id="IPR050075">
    <property type="entry name" value="LeuD"/>
</dbReference>
<dbReference type="NCBIfam" id="TIGR00171">
    <property type="entry name" value="leuD"/>
    <property type="match status" value="1"/>
</dbReference>
<dbReference type="NCBIfam" id="NF002458">
    <property type="entry name" value="PRK01641.1"/>
    <property type="match status" value="1"/>
</dbReference>
<dbReference type="PANTHER" id="PTHR43345:SF5">
    <property type="entry name" value="3-ISOPROPYLMALATE DEHYDRATASE SMALL SUBUNIT"/>
    <property type="match status" value="1"/>
</dbReference>
<dbReference type="PANTHER" id="PTHR43345">
    <property type="entry name" value="3-ISOPROPYLMALATE DEHYDRATASE SMALL SUBUNIT 2-RELATED-RELATED"/>
    <property type="match status" value="1"/>
</dbReference>
<dbReference type="Pfam" id="PF00694">
    <property type="entry name" value="Aconitase_C"/>
    <property type="match status" value="1"/>
</dbReference>
<dbReference type="SUPFAM" id="SSF52016">
    <property type="entry name" value="LeuD/IlvD-like"/>
    <property type="match status" value="1"/>
</dbReference>
<proteinExistence type="inferred from homology"/>
<comment type="function">
    <text evidence="1">Catalyzes the isomerization between 2-isopropylmalate and 3-isopropylmalate, via the formation of 2-isopropylmaleate.</text>
</comment>
<comment type="catalytic activity">
    <reaction evidence="1">
        <text>(2R,3S)-3-isopropylmalate = (2S)-2-isopropylmalate</text>
        <dbReference type="Rhea" id="RHEA:32287"/>
        <dbReference type="ChEBI" id="CHEBI:1178"/>
        <dbReference type="ChEBI" id="CHEBI:35121"/>
        <dbReference type="EC" id="4.2.1.33"/>
    </reaction>
</comment>
<comment type="pathway">
    <text evidence="1">Amino-acid biosynthesis; L-leucine biosynthesis; L-leucine from 3-methyl-2-oxobutanoate: step 2/4.</text>
</comment>
<comment type="subunit">
    <text evidence="1">Heterodimer of LeuC and LeuD.</text>
</comment>
<comment type="similarity">
    <text evidence="1">Belongs to the LeuD family. LeuD type 1 subfamily.</text>
</comment>
<evidence type="ECO:0000255" key="1">
    <source>
        <dbReference type="HAMAP-Rule" id="MF_01031"/>
    </source>
</evidence>
<sequence length="197" mass="22128">MEAFRTHTGIGVPLRRSNVDTDQIIPAVYLKRVTRTGFEDGLFAAWRNDPSFVLNLAPFDKGSVLVAGPDFGTGSSREHAVWALMDFGFRVVISSRFADIFRGNAGKAGLLAAEVSQDDVELLWKLIEQHPGTEITVNLQDRTITAGTMMVLFNIDDYTAWRLLEGLDDIGLTLRKLDEIEDYERHRPEWKPHTLPA</sequence>